<keyword id="KW-0167">Capsid protein</keyword>
<keyword id="KW-1185">Reference proteome</keyword>
<keyword id="KW-1141">T=2 icosahedral capsid protein</keyword>
<keyword id="KW-0946">Virion</keyword>
<dbReference type="EMBL" id="U41345">
    <property type="protein sequence ID" value="AAB94790.2"/>
    <property type="molecule type" value="Genomic_RNA"/>
</dbReference>
<dbReference type="RefSeq" id="NP_619669.2">
    <property type="nucleotide sequence ID" value="NC_003607.2"/>
</dbReference>
<dbReference type="SMR" id="O57043"/>
<dbReference type="GeneID" id="940191"/>
<dbReference type="KEGG" id="vg:940191"/>
<dbReference type="OrthoDB" id="2774at10239"/>
<dbReference type="Proteomes" id="UP000000352">
    <property type="component" value="Segment"/>
</dbReference>
<dbReference type="GO" id="GO:0039616">
    <property type="term" value="C:T=2 icosahedral viral capsid"/>
    <property type="evidence" value="ECO:0007669"/>
    <property type="project" value="UniProtKB-KW"/>
</dbReference>
<dbReference type="InterPro" id="IPR008871">
    <property type="entry name" value="Totivirus_coat"/>
</dbReference>
<dbReference type="Pfam" id="PF05518">
    <property type="entry name" value="Totivirus_coat"/>
    <property type="match status" value="1"/>
</dbReference>
<feature type="chain" id="PRO_0000404514" description="Major capsid protein">
    <location>
        <begin position="1"/>
        <end position="772"/>
    </location>
</feature>
<feature type="region of interest" description="Disordered" evidence="2">
    <location>
        <begin position="593"/>
        <end position="772"/>
    </location>
</feature>
<feature type="compositionally biased region" description="Gly residues" evidence="2">
    <location>
        <begin position="654"/>
        <end position="664"/>
    </location>
</feature>
<feature type="compositionally biased region" description="Pro residues" evidence="2">
    <location>
        <begin position="716"/>
        <end position="742"/>
    </location>
</feature>
<feature type="compositionally biased region" description="Low complexity" evidence="2">
    <location>
        <begin position="743"/>
        <end position="766"/>
    </location>
</feature>
<reference key="1">
    <citation type="journal article" date="1996" name="Proc. Natl. Acad. Sci. U.S.A.">
        <title>Organization and expression of the double-stranded RNA genome of Helminthosporium victoriae 190S virus, a totivirus infecting a plant pathogenic filamentous fungus.</title>
        <authorList>
            <person name="Huang S."/>
            <person name="Ghabrial S.A."/>
        </authorList>
    </citation>
    <scope>NUCLEOTIDE SEQUENCE [GENOMIC RNA]</scope>
</reference>
<reference key="2">
    <citation type="submission" date="1998-01" db="EMBL/GenBank/DDBJ databases">
        <title>Victorivirus: a new genus in the family Totiviridae.</title>
        <authorList>
            <person name="Ghbarial S.A."/>
            <person name="Nibert M."/>
            <person name="Xu L.L."/>
            <person name="Talkington M.W.T."/>
        </authorList>
    </citation>
    <scope>NUCLEOTIDE SEQUENCE [GENOMIC RNA]</scope>
</reference>
<sequence>MSHTTITNFLAGVIARPQGGNITSDETFRRYRTIVRTSATIGGNEDSRTTSIFHEIGRAVNTKGKALAVAGMEAPLVEASYPTNAVLVEDFIGLAKKYTNFSATFEYSSLAGVVERLARGLAACSVFEDVTSTDLRGNNPLAVHALATYDGPVNSLTSAVFIPRLVNNALTGDVFAVLCNCVAGEGGTVVTDTIELDANTRQPIVPEVGPLGVPGAIVDALRLLGSNMIASDQGPLFALALTRGIHRVLSVVGHTDEGGIVRDLLRCGGFGLPFGGIHYGLEEYSGLPALQFNSAAATAAYVDGIALVTAAVVAHADPGERYNGEWFPTFFDGTTHADTMRRSGDSTEGTAAMADRNRAQLLARQQLFWRPYITALGACFSTAGDISVAERFQCAASHSLGADPRHLRLPSVAPYFWIEPTGLIPHDFLGSVAEEEGFASYCWRDTTRTRPAWDSIVLSGARDTTFSAYHIRMKGARTAWFLAHWLGHPENGLGATRVRQLDPNAVLHPGPCEGNEQVRDRVEADLPLTDYLWRRGQSPFPAAGELLNLTSEWGILFRHVTFTDDGDLNPEHLPAAHEMADTTVTMTVGRPIGIAPGRSNAGDNQARRARTRASVELSAASRRARVFGRPDVGEMPTLTSAPAPIPASPAYDGNRGGEAGGVTGRGNNRSAAPGHASWSERQADGVPVNVTPHHNALRAPPFPRQQGALGGGGNVPLPPAPGAAPPPPPGPPNGPPAGPPPSDDGSSNPAAPVPTAIHAPPAAAQADRAEGQ</sequence>
<proteinExistence type="inferred from homology"/>
<protein>
    <recommendedName>
        <fullName>Major capsid protein</fullName>
    </recommendedName>
    <alternativeName>
        <fullName>Major coat protein</fullName>
    </alternativeName>
</protein>
<name>CAPSD_HV19S</name>
<evidence type="ECO:0000250" key="1"/>
<evidence type="ECO:0000256" key="2">
    <source>
        <dbReference type="SAM" id="MobiDB-lite"/>
    </source>
</evidence>
<evidence type="ECO:0000305" key="3"/>
<comment type="function">
    <text evidence="1">Capsid protein self-assembles to form an icosahedral capsid with a T=2 symmetry, 40 nm in diameter, and consisting of 60 capsid proteins asymmetric dimers. The capsid encapsulates the genomic dsRNA and the polymerase and remains intact following cell entry to protect the dsRNA from degradation and to prevent unfavorable antiviral responses in the host cell during all the replication cycle of the virus. Nascent transcripts are transcribed within the structural confines of the virion and are extruded into the cytoplasm (By similarity).</text>
</comment>
<comment type="function">
    <text evidence="1">Binds and removes 5' cap structures from cellular mRNA.</text>
</comment>
<comment type="subcellular location">
    <subcellularLocation>
        <location evidence="3">Virion</location>
    </subcellularLocation>
</comment>
<comment type="similarity">
    <text evidence="3">Belongs to the totivirus major capsid protein family.</text>
</comment>
<accession>O57043</accession>
<organism>
    <name type="scientific">Helminthosporium victoriae virus-190S</name>
    <name type="common">Hv190SV</name>
    <dbReference type="NCBI Taxonomy" id="45237"/>
    <lineage>
        <taxon>Viruses</taxon>
        <taxon>Riboviria</taxon>
        <taxon>Orthornavirae</taxon>
        <taxon>Duplornaviricota</taxon>
        <taxon>Chrymotiviricetes</taxon>
        <taxon>Ghabrivirales</taxon>
        <taxon>Totiviridae</taxon>
        <taxon>Victorivirus</taxon>
    </lineage>
</organism>